<feature type="chain" id="PRO_0000332346" description="Cobyric acid synthase">
    <location>
        <begin position="1"/>
        <end position="508"/>
    </location>
</feature>
<feature type="domain" description="GATase cobBQ-type" evidence="1">
    <location>
        <begin position="266"/>
        <end position="464"/>
    </location>
</feature>
<feature type="active site" description="Nucleophile" evidence="1">
    <location>
        <position position="347"/>
    </location>
</feature>
<feature type="active site" evidence="1">
    <location>
        <position position="456"/>
    </location>
</feature>
<keyword id="KW-0169">Cobalamin biosynthesis</keyword>
<keyword id="KW-0315">Glutamine amidotransferase</keyword>
<keyword id="KW-1185">Reference proteome</keyword>
<comment type="function">
    <text evidence="1">Catalyzes amidations at positions B, D, E, and G on adenosylcobyrinic A,C-diamide. NH(2) groups are provided by glutamine, and one molecule of ATP is hydrogenolyzed for each amidation.</text>
</comment>
<comment type="pathway">
    <text evidence="1">Cofactor biosynthesis; adenosylcobalamin biosynthesis.</text>
</comment>
<comment type="similarity">
    <text evidence="1">Belongs to the CobB/CobQ family. CobQ subfamily.</text>
</comment>
<proteinExistence type="inferred from homology"/>
<evidence type="ECO:0000255" key="1">
    <source>
        <dbReference type="HAMAP-Rule" id="MF_00028"/>
    </source>
</evidence>
<protein>
    <recommendedName>
        <fullName evidence="1">Cobyric acid synthase</fullName>
    </recommendedName>
</protein>
<reference key="1">
    <citation type="journal article" date="2007" name="J. Bacteriol.">
        <title>Whole-genome analysis of the methyl tert-butyl ether-degrading beta-proteobacterium Methylibium petroleiphilum PM1.</title>
        <authorList>
            <person name="Kane S.R."/>
            <person name="Chakicherla A.Y."/>
            <person name="Chain P.S.G."/>
            <person name="Schmidt R."/>
            <person name="Shin M.W."/>
            <person name="Legler T.C."/>
            <person name="Scow K.M."/>
            <person name="Larimer F.W."/>
            <person name="Lucas S.M."/>
            <person name="Richardson P.M."/>
            <person name="Hristova K.R."/>
        </authorList>
    </citation>
    <scope>NUCLEOTIDE SEQUENCE [LARGE SCALE GENOMIC DNA]</scope>
    <source>
        <strain>ATCC BAA-1232 / LMG 22953 / PM1</strain>
    </source>
</reference>
<name>COBQ_METPP</name>
<sequence length="508" mass="54594">MNGRTRSPARAVMVLGTTSGAGKSWLATALCRWYARQGLKVAPFKAQNMSNNARVVPGSGGRLGEIGSAQYFQALAARVLPDVRMNPVLLKPENDTGSQVVVLGEVRADLAAVPWRERSERLWPFAQDALLALMAENDVVVIEGAGSPAEINLHASDYVNMRTAQAARAACLLVSDIDRGGAFAHLYGTHQLLPAAERALLRGYVLNRFRGDARLLEPGPQQLLALTGVPTLAVLPMWRGHGLPEEDGLHDEGPGWQRGAGNAAASLRIAVVAYPRISNLDEFQPLRQLRGVQLRWARSAEELAGADWIVLPGSKHTSGDLAWLREQRIDAALARHAAARRPVLGLCGGLQMLGEALVDPHGVEGENGEGNAPGLGLLPLVTAFEPDKLLRRTDACFDGVGDEWSMLRGVQFGGYEIRHGRSVQHPALPAAAVALRNAEGEAIGWQQGSVLGLYAHGLFESTEVLRALFGARVRGLESVFDGLADFIDRHFEPGALMRLLADAEPGKD</sequence>
<gene>
    <name evidence="1" type="primary">cobQ</name>
    <name type="ordered locus">Mpe_A2304</name>
</gene>
<organism>
    <name type="scientific">Methylibium petroleiphilum (strain ATCC BAA-1232 / LMG 22953 / PM1)</name>
    <dbReference type="NCBI Taxonomy" id="420662"/>
    <lineage>
        <taxon>Bacteria</taxon>
        <taxon>Pseudomonadati</taxon>
        <taxon>Pseudomonadota</taxon>
        <taxon>Betaproteobacteria</taxon>
        <taxon>Burkholderiales</taxon>
        <taxon>Sphaerotilaceae</taxon>
        <taxon>Methylibium</taxon>
    </lineage>
</organism>
<dbReference type="EMBL" id="CP000555">
    <property type="protein sequence ID" value="ABM95260.1"/>
    <property type="molecule type" value="Genomic_DNA"/>
</dbReference>
<dbReference type="RefSeq" id="WP_011829897.1">
    <property type="nucleotide sequence ID" value="NC_008825.1"/>
</dbReference>
<dbReference type="STRING" id="420662.Mpe_A2304"/>
<dbReference type="KEGG" id="mpt:Mpe_A2304"/>
<dbReference type="eggNOG" id="COG1492">
    <property type="taxonomic scope" value="Bacteria"/>
</dbReference>
<dbReference type="HOGENOM" id="CLU_019250_2_1_4"/>
<dbReference type="UniPathway" id="UPA00148"/>
<dbReference type="Proteomes" id="UP000000366">
    <property type="component" value="Chromosome"/>
</dbReference>
<dbReference type="GO" id="GO:0015420">
    <property type="term" value="F:ABC-type vitamin B12 transporter activity"/>
    <property type="evidence" value="ECO:0007669"/>
    <property type="project" value="UniProtKB-UniRule"/>
</dbReference>
<dbReference type="GO" id="GO:0003824">
    <property type="term" value="F:catalytic activity"/>
    <property type="evidence" value="ECO:0007669"/>
    <property type="project" value="InterPro"/>
</dbReference>
<dbReference type="GO" id="GO:0009236">
    <property type="term" value="P:cobalamin biosynthetic process"/>
    <property type="evidence" value="ECO:0007669"/>
    <property type="project" value="UniProtKB-UniRule"/>
</dbReference>
<dbReference type="CDD" id="cd05389">
    <property type="entry name" value="CobQ_N"/>
    <property type="match status" value="1"/>
</dbReference>
<dbReference type="CDD" id="cd01750">
    <property type="entry name" value="GATase1_CobQ"/>
    <property type="match status" value="1"/>
</dbReference>
<dbReference type="Gene3D" id="3.40.50.880">
    <property type="match status" value="1"/>
</dbReference>
<dbReference type="Gene3D" id="3.40.50.300">
    <property type="entry name" value="P-loop containing nucleotide triphosphate hydrolases"/>
    <property type="match status" value="1"/>
</dbReference>
<dbReference type="HAMAP" id="MF_00028">
    <property type="entry name" value="CobQ"/>
    <property type="match status" value="1"/>
</dbReference>
<dbReference type="InterPro" id="IPR029062">
    <property type="entry name" value="Class_I_gatase-like"/>
</dbReference>
<dbReference type="InterPro" id="IPR002586">
    <property type="entry name" value="CobQ/CobB/MinD/ParA_Nub-bd_dom"/>
</dbReference>
<dbReference type="InterPro" id="IPR033949">
    <property type="entry name" value="CobQ_GATase1"/>
</dbReference>
<dbReference type="InterPro" id="IPR047045">
    <property type="entry name" value="CobQ_N"/>
</dbReference>
<dbReference type="InterPro" id="IPR004459">
    <property type="entry name" value="CobQ_synth"/>
</dbReference>
<dbReference type="InterPro" id="IPR011698">
    <property type="entry name" value="GATase_3"/>
</dbReference>
<dbReference type="InterPro" id="IPR027417">
    <property type="entry name" value="P-loop_NTPase"/>
</dbReference>
<dbReference type="NCBIfam" id="TIGR00313">
    <property type="entry name" value="cobQ"/>
    <property type="match status" value="1"/>
</dbReference>
<dbReference type="NCBIfam" id="NF001989">
    <property type="entry name" value="PRK00784.1"/>
    <property type="match status" value="1"/>
</dbReference>
<dbReference type="PANTHER" id="PTHR21343:SF1">
    <property type="entry name" value="COBYRIC ACID SYNTHASE"/>
    <property type="match status" value="1"/>
</dbReference>
<dbReference type="PANTHER" id="PTHR21343">
    <property type="entry name" value="DETHIOBIOTIN SYNTHETASE"/>
    <property type="match status" value="1"/>
</dbReference>
<dbReference type="Pfam" id="PF01656">
    <property type="entry name" value="CbiA"/>
    <property type="match status" value="1"/>
</dbReference>
<dbReference type="Pfam" id="PF07685">
    <property type="entry name" value="GATase_3"/>
    <property type="match status" value="1"/>
</dbReference>
<dbReference type="SUPFAM" id="SSF52317">
    <property type="entry name" value="Class I glutamine amidotransferase-like"/>
    <property type="match status" value="1"/>
</dbReference>
<dbReference type="SUPFAM" id="SSF52540">
    <property type="entry name" value="P-loop containing nucleoside triphosphate hydrolases"/>
    <property type="match status" value="1"/>
</dbReference>
<dbReference type="PROSITE" id="PS51274">
    <property type="entry name" value="GATASE_COBBQ"/>
    <property type="match status" value="1"/>
</dbReference>
<accession>A2SI71</accession>